<evidence type="ECO:0000255" key="1">
    <source>
        <dbReference type="PROSITE-ProRule" id="PRU00254"/>
    </source>
</evidence>
<evidence type="ECO:0007829" key="2">
    <source>
        <dbReference type="PDB" id="1Q08"/>
    </source>
</evidence>
<comment type="function">
    <text>Zinc-responsive transcriptional regulator of zntA.</text>
</comment>
<comment type="subunit">
    <text>Homodimer.</text>
</comment>
<comment type="interaction">
    <interactant intactId="EBI-562184">
        <id>P0ACS5</id>
    </interactant>
    <interactant intactId="EBI-556240">
        <id>P75959</id>
        <label>nagK</label>
    </interactant>
    <organismsDiffer>false</organismsDiffer>
    <experiments>2</experiments>
</comment>
<dbReference type="EMBL" id="L29458">
    <property type="protein sequence ID" value="AAA24773.1"/>
    <property type="molecule type" value="Genomic_DNA"/>
</dbReference>
<dbReference type="EMBL" id="U18997">
    <property type="protein sequence ID" value="AAA58089.1"/>
    <property type="molecule type" value="Genomic_DNA"/>
</dbReference>
<dbReference type="EMBL" id="U00096">
    <property type="protein sequence ID" value="AAC76317.1"/>
    <property type="molecule type" value="Genomic_DNA"/>
</dbReference>
<dbReference type="EMBL" id="AP009048">
    <property type="protein sequence ID" value="BAE77999.1"/>
    <property type="molecule type" value="Genomic_DNA"/>
</dbReference>
<dbReference type="PIR" id="I67892">
    <property type="entry name" value="I67892"/>
</dbReference>
<dbReference type="RefSeq" id="NP_417751.1">
    <property type="nucleotide sequence ID" value="NC_000913.3"/>
</dbReference>
<dbReference type="RefSeq" id="WP_000285607.1">
    <property type="nucleotide sequence ID" value="NZ_STEB01000038.1"/>
</dbReference>
<dbReference type="PDB" id="1Q08">
    <property type="method" value="X-ray"/>
    <property type="resolution" value="1.90 A"/>
    <property type="chains" value="A/B=43-141"/>
</dbReference>
<dbReference type="PDB" id="1Q09">
    <property type="method" value="X-ray"/>
    <property type="resolution" value="2.50 A"/>
    <property type="chains" value="A=43-141"/>
</dbReference>
<dbReference type="PDB" id="1Q0A">
    <property type="method" value="X-ray"/>
    <property type="resolution" value="2.00 A"/>
    <property type="chains" value="A/B=43-141"/>
</dbReference>
<dbReference type="PDBsum" id="1Q08"/>
<dbReference type="PDBsum" id="1Q09"/>
<dbReference type="PDBsum" id="1Q0A"/>
<dbReference type="SMR" id="P0ACS5"/>
<dbReference type="BioGRID" id="4263395">
    <property type="interactions" value="107"/>
</dbReference>
<dbReference type="DIP" id="DIP-48253N"/>
<dbReference type="FunCoup" id="P0ACS5">
    <property type="interactions" value="187"/>
</dbReference>
<dbReference type="IntAct" id="P0ACS5">
    <property type="interactions" value="5"/>
</dbReference>
<dbReference type="STRING" id="511145.b3292"/>
<dbReference type="jPOST" id="P0ACS5"/>
<dbReference type="PaxDb" id="511145-b3292"/>
<dbReference type="EnsemblBacteria" id="AAC76317">
    <property type="protein sequence ID" value="AAC76317"/>
    <property type="gene ID" value="b3292"/>
</dbReference>
<dbReference type="GeneID" id="93778695"/>
<dbReference type="GeneID" id="947786"/>
<dbReference type="KEGG" id="ecj:JW3254"/>
<dbReference type="KEGG" id="eco:b3292"/>
<dbReference type="KEGG" id="ecoc:C3026_17900"/>
<dbReference type="PATRIC" id="fig|1411691.4.peg.3439"/>
<dbReference type="EchoBASE" id="EB1912"/>
<dbReference type="eggNOG" id="COG0789">
    <property type="taxonomic scope" value="Bacteria"/>
</dbReference>
<dbReference type="HOGENOM" id="CLU_060077_2_0_6"/>
<dbReference type="InParanoid" id="P0ACS5"/>
<dbReference type="OMA" id="HTCEESK"/>
<dbReference type="OrthoDB" id="9808480at2"/>
<dbReference type="PhylomeDB" id="P0ACS5"/>
<dbReference type="BioCyc" id="EcoCyc:EG11969-MONOMER"/>
<dbReference type="EvolutionaryTrace" id="P0ACS5"/>
<dbReference type="PRO" id="PR:P0ACS5"/>
<dbReference type="Proteomes" id="UP000000625">
    <property type="component" value="Chromosome"/>
</dbReference>
<dbReference type="GO" id="GO:0000987">
    <property type="term" value="F:cis-regulatory region sequence-specific DNA binding"/>
    <property type="evidence" value="ECO:0000314"/>
    <property type="project" value="EcoCyc"/>
</dbReference>
<dbReference type="GO" id="GO:0001216">
    <property type="term" value="F:DNA-binding transcription activator activity"/>
    <property type="evidence" value="ECO:0000314"/>
    <property type="project" value="EcoCyc"/>
</dbReference>
<dbReference type="GO" id="GO:0003700">
    <property type="term" value="F:DNA-binding transcription factor activity"/>
    <property type="evidence" value="ECO:0000314"/>
    <property type="project" value="EcoCyc"/>
</dbReference>
<dbReference type="GO" id="GO:0008270">
    <property type="term" value="F:zinc ion binding"/>
    <property type="evidence" value="ECO:0000314"/>
    <property type="project" value="EcoCyc"/>
</dbReference>
<dbReference type="GO" id="GO:0006351">
    <property type="term" value="P:DNA-templated transcription"/>
    <property type="evidence" value="ECO:0007669"/>
    <property type="project" value="InterPro"/>
</dbReference>
<dbReference type="GO" id="GO:0045893">
    <property type="term" value="P:positive regulation of DNA-templated transcription"/>
    <property type="evidence" value="ECO:0000314"/>
    <property type="project" value="EcoCyc"/>
</dbReference>
<dbReference type="CDD" id="cd04770">
    <property type="entry name" value="HTH_HMRTR"/>
    <property type="match status" value="1"/>
</dbReference>
<dbReference type="FunFam" id="1.10.1660.10:FF:000004">
    <property type="entry name" value="Zn(II)-responsive transcriptional regulator"/>
    <property type="match status" value="1"/>
</dbReference>
<dbReference type="Gene3D" id="1.10.1660.10">
    <property type="match status" value="1"/>
</dbReference>
<dbReference type="InterPro" id="IPR009061">
    <property type="entry name" value="DNA-bd_dom_put_sf"/>
</dbReference>
<dbReference type="InterPro" id="IPR000551">
    <property type="entry name" value="MerR-type_HTH_dom"/>
</dbReference>
<dbReference type="InterPro" id="IPR047057">
    <property type="entry name" value="MerR_fam"/>
</dbReference>
<dbReference type="InterPro" id="IPR011788">
    <property type="entry name" value="ZntR"/>
</dbReference>
<dbReference type="NCBIfam" id="NF007069">
    <property type="entry name" value="PRK09514.1"/>
    <property type="match status" value="1"/>
</dbReference>
<dbReference type="NCBIfam" id="TIGR02043">
    <property type="entry name" value="ZntR"/>
    <property type="match status" value="1"/>
</dbReference>
<dbReference type="PANTHER" id="PTHR30204:SF92">
    <property type="entry name" value="HTH-TYPE TRANSCRIPTIONAL REGULATOR ZNTR"/>
    <property type="match status" value="1"/>
</dbReference>
<dbReference type="PANTHER" id="PTHR30204">
    <property type="entry name" value="REDOX-CYCLING DRUG-SENSING TRANSCRIPTIONAL ACTIVATOR SOXR"/>
    <property type="match status" value="1"/>
</dbReference>
<dbReference type="Pfam" id="PF13411">
    <property type="entry name" value="MerR_1"/>
    <property type="match status" value="1"/>
</dbReference>
<dbReference type="PRINTS" id="PR00040">
    <property type="entry name" value="HTHMERR"/>
</dbReference>
<dbReference type="SMART" id="SM00422">
    <property type="entry name" value="HTH_MERR"/>
    <property type="match status" value="1"/>
</dbReference>
<dbReference type="SUPFAM" id="SSF46955">
    <property type="entry name" value="Putative DNA-binding domain"/>
    <property type="match status" value="1"/>
</dbReference>
<dbReference type="PROSITE" id="PS00552">
    <property type="entry name" value="HTH_MERR_1"/>
    <property type="match status" value="1"/>
</dbReference>
<dbReference type="PROSITE" id="PS50937">
    <property type="entry name" value="HTH_MERR_2"/>
    <property type="match status" value="1"/>
</dbReference>
<protein>
    <recommendedName>
        <fullName>HTH-type transcriptional regulator ZntR</fullName>
    </recommendedName>
    <alternativeName>
        <fullName>Zn(II)-responsive regulator of zntA</fullName>
    </alternativeName>
</protein>
<organism>
    <name type="scientific">Escherichia coli (strain K12)</name>
    <dbReference type="NCBI Taxonomy" id="83333"/>
    <lineage>
        <taxon>Bacteria</taxon>
        <taxon>Pseudomonadati</taxon>
        <taxon>Pseudomonadota</taxon>
        <taxon>Gammaproteobacteria</taxon>
        <taxon>Enterobacterales</taxon>
        <taxon>Enterobacteriaceae</taxon>
        <taxon>Escherichia</taxon>
    </lineage>
</organism>
<reference key="1">
    <citation type="journal article" date="1994" name="Gene">
        <title>A merR homologue at 74 minutes on the Escherichia coli genome.</title>
        <authorList>
            <person name="Christie G.E."/>
            <person name="White T.J."/>
            <person name="Goodwin T.S."/>
        </authorList>
    </citation>
    <scope>NUCLEOTIDE SEQUENCE [GENOMIC DNA]</scope>
</reference>
<reference key="2">
    <citation type="journal article" date="1997" name="Science">
        <title>The complete genome sequence of Escherichia coli K-12.</title>
        <authorList>
            <person name="Blattner F.R."/>
            <person name="Plunkett G. III"/>
            <person name="Bloch C.A."/>
            <person name="Perna N.T."/>
            <person name="Burland V."/>
            <person name="Riley M."/>
            <person name="Collado-Vides J."/>
            <person name="Glasner J.D."/>
            <person name="Rode C.K."/>
            <person name="Mayhew G.F."/>
            <person name="Gregor J."/>
            <person name="Davis N.W."/>
            <person name="Kirkpatrick H.A."/>
            <person name="Goeden M.A."/>
            <person name="Rose D.J."/>
            <person name="Mau B."/>
            <person name="Shao Y."/>
        </authorList>
    </citation>
    <scope>NUCLEOTIDE SEQUENCE [LARGE SCALE GENOMIC DNA]</scope>
    <source>
        <strain>K12 / MG1655 / ATCC 47076</strain>
    </source>
</reference>
<reference key="3">
    <citation type="journal article" date="2006" name="Mol. Syst. Biol.">
        <title>Highly accurate genome sequences of Escherichia coli K-12 strains MG1655 and W3110.</title>
        <authorList>
            <person name="Hayashi K."/>
            <person name="Morooka N."/>
            <person name="Yamamoto Y."/>
            <person name="Fujita K."/>
            <person name="Isono K."/>
            <person name="Choi S."/>
            <person name="Ohtsubo E."/>
            <person name="Baba T."/>
            <person name="Wanner B.L."/>
            <person name="Mori H."/>
            <person name="Horiuchi T."/>
        </authorList>
    </citation>
    <scope>NUCLEOTIDE SEQUENCE [LARGE SCALE GENOMIC DNA]</scope>
    <source>
        <strain>K12 / W3110 / ATCC 27325 / DSM 5911</strain>
    </source>
</reference>
<reference key="4">
    <citation type="journal article" date="1999" name="Mol. Microbiol.">
        <title>ZntR is a Zn(II)-responsive MerR-like transcriptional regulator of zntA in Escherichia coli.</title>
        <authorList>
            <person name="Brocklehurst K.R."/>
            <person name="Hobman J.L."/>
            <person name="Lawley B."/>
            <person name="Blank L."/>
            <person name="Marshall S.J."/>
            <person name="Brown N.L."/>
            <person name="Morby A.P."/>
        </authorList>
    </citation>
    <scope>CHARACTERIZATION</scope>
</reference>
<reference key="5">
    <citation type="journal article" date="2003" name="Science">
        <title>Molecular basis of metal-ion selectivity and zeptomolar sensitivity by CueR.</title>
        <authorList>
            <person name="Changela A."/>
            <person name="Chen K."/>
            <person name="Xue Y."/>
            <person name="Holschen J."/>
            <person name="Outten C.E."/>
            <person name="O'Halloran T.V."/>
            <person name="Mondragon A."/>
        </authorList>
    </citation>
    <scope>X-RAY CRYSTALLOGRAPHY (1.9 ANGSTROMS)</scope>
</reference>
<name>ZNTR_ECOLI</name>
<keyword id="KW-0002">3D-structure</keyword>
<keyword id="KW-0238">DNA-binding</keyword>
<keyword id="KW-0479">Metal-binding</keyword>
<keyword id="KW-1185">Reference proteome</keyword>
<keyword id="KW-0804">Transcription</keyword>
<keyword id="KW-0805">Transcription regulation</keyword>
<keyword id="KW-0862">Zinc</keyword>
<feature type="chain" id="PRO_0000098160" description="HTH-type transcriptional regulator ZntR">
    <location>
        <begin position="1"/>
        <end position="141"/>
    </location>
</feature>
<feature type="domain" description="HTH merR-type" evidence="1">
    <location>
        <begin position="1"/>
        <end position="70"/>
    </location>
</feature>
<feature type="DNA-binding region" description="H-T-H motif" evidence="1">
    <location>
        <begin position="4"/>
        <end position="23"/>
    </location>
</feature>
<feature type="binding site">
    <location>
        <position position="114"/>
    </location>
    <ligand>
        <name>Zn(2+)</name>
        <dbReference type="ChEBI" id="CHEBI:29105"/>
    </ligand>
</feature>
<feature type="binding site">
    <location>
        <position position="115"/>
    </location>
    <ligand>
        <name>Zn(2+)</name>
        <dbReference type="ChEBI" id="CHEBI:29105"/>
    </ligand>
</feature>
<feature type="binding site">
    <location>
        <position position="119"/>
    </location>
    <ligand>
        <name>Zn(2+)</name>
        <dbReference type="ChEBI" id="CHEBI:29105"/>
    </ligand>
</feature>
<feature type="binding site">
    <location>
        <position position="124"/>
    </location>
    <ligand>
        <name>Zn(2+)</name>
        <dbReference type="ChEBI" id="CHEBI:29105"/>
    </ligand>
</feature>
<feature type="helix" evidence="2">
    <location>
        <begin position="44"/>
        <end position="56"/>
    </location>
</feature>
<feature type="helix" evidence="2">
    <location>
        <begin position="61"/>
        <end position="72"/>
    </location>
</feature>
<feature type="helix" evidence="2">
    <location>
        <begin position="74"/>
        <end position="76"/>
    </location>
</feature>
<feature type="helix" evidence="2">
    <location>
        <begin position="79"/>
        <end position="113"/>
    </location>
</feature>
<feature type="strand" evidence="2">
    <location>
        <begin position="117"/>
        <end position="120"/>
    </location>
</feature>
<feature type="helix" evidence="2">
    <location>
        <begin position="121"/>
        <end position="123"/>
    </location>
</feature>
<feature type="helix" evidence="2">
    <location>
        <begin position="125"/>
        <end position="132"/>
    </location>
</feature>
<accession>P0ACS5</accession>
<accession>P36676</accession>
<accession>Q2M6V7</accession>
<gene>
    <name type="primary">zntR</name>
    <name type="synonym">yhdM</name>
    <name type="ordered locus">b3292</name>
    <name type="ordered locus">JW3254</name>
</gene>
<proteinExistence type="evidence at protein level"/>
<sequence length="141" mass="16179">MYRIGELAKMAEVTPDTIRYYEKQQMMEHEVRTEGGFRLYTESDLQRLKFIRHARQLGFSLESIRELLSIRIDPEHHTCQESKGIVQERLQEVEARIAELQSMQRSLQRLNDACCGTAHSSVYCSILEALEQGASGVKSGC</sequence>